<accession>O28469</accession>
<reference key="1">
    <citation type="journal article" date="1997" name="Nature">
        <title>The complete genome sequence of the hyperthermophilic, sulphate-reducing archaeon Archaeoglobus fulgidus.</title>
        <authorList>
            <person name="Klenk H.-P."/>
            <person name="Clayton R.A."/>
            <person name="Tomb J.-F."/>
            <person name="White O."/>
            <person name="Nelson K.E."/>
            <person name="Ketchum K.A."/>
            <person name="Dodson R.J."/>
            <person name="Gwinn M.L."/>
            <person name="Hickey E.K."/>
            <person name="Peterson J.D."/>
            <person name="Richardson D.L."/>
            <person name="Kerlavage A.R."/>
            <person name="Graham D.E."/>
            <person name="Kyrpides N.C."/>
            <person name="Fleischmann R.D."/>
            <person name="Quackenbush J."/>
            <person name="Lee N.H."/>
            <person name="Sutton G.G."/>
            <person name="Gill S.R."/>
            <person name="Kirkness E.F."/>
            <person name="Dougherty B.A."/>
            <person name="McKenney K."/>
            <person name="Adams M.D."/>
            <person name="Loftus B.J."/>
            <person name="Peterson S.N."/>
            <person name="Reich C.I."/>
            <person name="McNeil L.K."/>
            <person name="Badger J.H."/>
            <person name="Glodek A."/>
            <person name="Zhou L."/>
            <person name="Overbeek R."/>
            <person name="Gocayne J.D."/>
            <person name="Weidman J.F."/>
            <person name="McDonald L.A."/>
            <person name="Utterback T.R."/>
            <person name="Cotton M.D."/>
            <person name="Spriggs T."/>
            <person name="Artiach P."/>
            <person name="Kaine B.P."/>
            <person name="Sykes S.M."/>
            <person name="Sadow P.W."/>
            <person name="D'Andrea K.P."/>
            <person name="Bowman C."/>
            <person name="Fujii C."/>
            <person name="Garland S.A."/>
            <person name="Mason T.M."/>
            <person name="Olsen G.J."/>
            <person name="Fraser C.M."/>
            <person name="Smith H.O."/>
            <person name="Woese C.R."/>
            <person name="Venter J.C."/>
        </authorList>
    </citation>
    <scope>NUCLEOTIDE SEQUENCE [LARGE SCALE GENOMIC DNA]</scope>
    <source>
        <strain>ATCC 49558 / DSM 4304 / JCM 9628 / NBRC 100126 / VC-16</strain>
    </source>
</reference>
<evidence type="ECO:0000255" key="1">
    <source>
        <dbReference type="HAMAP-Rule" id="MF_00952"/>
    </source>
</evidence>
<evidence type="ECO:0000255" key="2">
    <source>
        <dbReference type="PROSITE-ProRule" id="PRU01383"/>
    </source>
</evidence>
<sequence length="663" mass="76018">MVMSWLIITEKDNTARRIASILFKDVKTLKKGRVSYYHSPSNDAYVVGLKGHIVELDFPKELNNWTKTPLEKLLQAELVKKVKERTISSILKEIAKKADRVTVATDYDREGELIGVEALEIVKSVNPTVKVDRVRYSAVTEKEIRSAFSKPVKVDFNLANAALARQKIDLIWGATLTRLISVHSGRMGKDFLSVGRVQTPTLRLIVDRELEIQNFKPEKYYEIFAEFEGFIAKHPKRYGSKEEAEKLFAKIGETAKVEEFTRRRMEENRPTPFNTTEFLREASKFMSPHKAMNIAETLYMNGYISYPRTDNTVYPPTINLIEIVSALSSVFPREAQIVLSQDKITPSRGRRETKDHPPIYPTGVAKRGELSKDEWTIYELVVRRFLATLAPKAVWDVRRVVLDSNGVKFVANGRQLVEAGWRDIYIYSKAEETELPLLKKGDVLRILKKRLEEKETKPPGRYSASSLIKMMEKLNLGTKSTRHEIIQKLVSRRYIHGNPFRPSETAFSVINVLKETAETITLPDMTAKLENEMDLIAEGKKREPEVVDESREMLLQILRAIDYRKLSKDLREGVKKDKIVGKCPECGGELVVRQSKAGKRFIGCSNYPDCTFTLPLPQNGTLYITAKQCKEHEIKEVKIRTKKGYWNLGCPYCNYLNWKKENS</sequence>
<proteinExistence type="inferred from homology"/>
<feature type="chain" id="PRO_0000145177" description="DNA topoisomerase 1">
    <location>
        <begin position="1"/>
        <end position="663"/>
    </location>
</feature>
<feature type="domain" description="Toprim" evidence="1">
    <location>
        <begin position="4"/>
        <end position="137"/>
    </location>
</feature>
<feature type="domain" description="Topo IA-type catalytic" evidence="2">
    <location>
        <begin position="155"/>
        <end position="558"/>
    </location>
</feature>
<feature type="zinc finger region" description="C4-type 1">
    <location>
        <begin position="583"/>
        <end position="610"/>
    </location>
</feature>
<feature type="zinc finger region" description="C4-type 2; atypical">
    <location>
        <begin position="629"/>
        <end position="653"/>
    </location>
</feature>
<feature type="region of interest" description="Interaction with DNA" evidence="1">
    <location>
        <begin position="193"/>
        <end position="198"/>
    </location>
</feature>
<feature type="active site" description="O-(5'-phospho-DNA)-tyrosine intermediate" evidence="2">
    <location>
        <position position="306"/>
    </location>
</feature>
<feature type="binding site" evidence="1">
    <location>
        <position position="10"/>
    </location>
    <ligand>
        <name>Mg(2+)</name>
        <dbReference type="ChEBI" id="CHEBI:18420"/>
        <note>catalytic</note>
    </ligand>
</feature>
<feature type="binding site" evidence="1">
    <location>
        <position position="106"/>
    </location>
    <ligand>
        <name>Mg(2+)</name>
        <dbReference type="ChEBI" id="CHEBI:18420"/>
        <note>catalytic</note>
    </ligand>
</feature>
<feature type="site" description="Interaction with DNA" evidence="1">
    <location>
        <position position="52"/>
    </location>
</feature>
<feature type="site" description="Interaction with DNA" evidence="1">
    <location>
        <position position="165"/>
    </location>
</feature>
<feature type="site" description="Interaction with DNA" evidence="1">
    <location>
        <position position="169"/>
    </location>
</feature>
<feature type="site" description="Interaction with DNA" evidence="1">
    <location>
        <position position="308"/>
    </location>
</feature>
<feature type="site" description="Interaction with DNA" evidence="1">
    <location>
        <position position="492"/>
    </location>
</feature>
<comment type="function">
    <text evidence="1">Releases the supercoiling and torsional tension of DNA, which is introduced during the DNA replication and transcription, by transiently cleaving and rejoining one strand of the DNA duplex. Introduces a single-strand break via transesterification at a target site in duplex DNA. The scissile phosphodiester is attacked by the catalytic tyrosine of the enzyme, resulting in the formation of a DNA-(5'-phosphotyrosyl)-enzyme intermediate and the expulsion of a 3'-OH DNA strand. The free DNA strand then undergoes passage around the unbroken strand, thus removing DNA supercoils. Finally, in the religation step, the DNA 3'-OH attacks the covalent intermediate to expel the active-site tyrosine and restore the DNA phosphodiester backbone.</text>
</comment>
<comment type="catalytic activity">
    <reaction evidence="1">
        <text>ATP-independent breakage of single-stranded DNA, followed by passage and rejoining.</text>
        <dbReference type="EC" id="5.6.2.1"/>
    </reaction>
</comment>
<comment type="cofactor">
    <cofactor evidence="1">
        <name>Mg(2+)</name>
        <dbReference type="ChEBI" id="CHEBI:18420"/>
    </cofactor>
</comment>
<comment type="subunit">
    <text evidence="1">Monomer.</text>
</comment>
<comment type="similarity">
    <text evidence="1">Belongs to the type IA topoisomerase family.</text>
</comment>
<organism>
    <name type="scientific">Archaeoglobus fulgidus (strain ATCC 49558 / DSM 4304 / JCM 9628 / NBRC 100126 / VC-16)</name>
    <dbReference type="NCBI Taxonomy" id="224325"/>
    <lineage>
        <taxon>Archaea</taxon>
        <taxon>Methanobacteriati</taxon>
        <taxon>Methanobacteriota</taxon>
        <taxon>Archaeoglobi</taxon>
        <taxon>Archaeoglobales</taxon>
        <taxon>Archaeoglobaceae</taxon>
        <taxon>Archaeoglobus</taxon>
    </lineage>
</organism>
<gene>
    <name evidence="1" type="primary">topA</name>
    <name type="ordered locus">AF_1806</name>
</gene>
<keyword id="KW-0238">DNA-binding</keyword>
<keyword id="KW-0413">Isomerase</keyword>
<keyword id="KW-0460">Magnesium</keyword>
<keyword id="KW-0479">Metal-binding</keyword>
<keyword id="KW-1185">Reference proteome</keyword>
<keyword id="KW-0677">Repeat</keyword>
<keyword id="KW-0799">Topoisomerase</keyword>
<keyword id="KW-0862">Zinc</keyword>
<keyword id="KW-0863">Zinc-finger</keyword>
<dbReference type="EC" id="5.6.2.1" evidence="1"/>
<dbReference type="EMBL" id="AE000782">
    <property type="protein sequence ID" value="AAB89443.1"/>
    <property type="molecule type" value="Genomic_DNA"/>
</dbReference>
<dbReference type="PIR" id="E69475">
    <property type="entry name" value="E69475"/>
</dbReference>
<dbReference type="SMR" id="O28469"/>
<dbReference type="STRING" id="224325.AF_1806"/>
<dbReference type="PaxDb" id="224325-AF_1806"/>
<dbReference type="EnsemblBacteria" id="AAB89443">
    <property type="protein sequence ID" value="AAB89443"/>
    <property type="gene ID" value="AF_1806"/>
</dbReference>
<dbReference type="KEGG" id="afu:AF_1806"/>
<dbReference type="eggNOG" id="arCOG01527">
    <property type="taxonomic scope" value="Archaea"/>
</dbReference>
<dbReference type="HOGENOM" id="CLU_002929_1_4_2"/>
<dbReference type="OrthoDB" id="30963at2157"/>
<dbReference type="PhylomeDB" id="O28469"/>
<dbReference type="Proteomes" id="UP000002199">
    <property type="component" value="Chromosome"/>
</dbReference>
<dbReference type="GO" id="GO:0005694">
    <property type="term" value="C:chromosome"/>
    <property type="evidence" value="ECO:0007669"/>
    <property type="project" value="InterPro"/>
</dbReference>
<dbReference type="GO" id="GO:0003677">
    <property type="term" value="F:DNA binding"/>
    <property type="evidence" value="ECO:0007669"/>
    <property type="project" value="UniProtKB-KW"/>
</dbReference>
<dbReference type="GO" id="GO:0003917">
    <property type="term" value="F:DNA topoisomerase type I (single strand cut, ATP-independent) activity"/>
    <property type="evidence" value="ECO:0007669"/>
    <property type="project" value="UniProtKB-UniRule"/>
</dbReference>
<dbReference type="GO" id="GO:0008270">
    <property type="term" value="F:zinc ion binding"/>
    <property type="evidence" value="ECO:0007669"/>
    <property type="project" value="UniProtKB-KW"/>
</dbReference>
<dbReference type="GO" id="GO:0006310">
    <property type="term" value="P:DNA recombination"/>
    <property type="evidence" value="ECO:0007669"/>
    <property type="project" value="TreeGrafter"/>
</dbReference>
<dbReference type="GO" id="GO:0006281">
    <property type="term" value="P:DNA repair"/>
    <property type="evidence" value="ECO:0007669"/>
    <property type="project" value="TreeGrafter"/>
</dbReference>
<dbReference type="GO" id="GO:0006265">
    <property type="term" value="P:DNA topological change"/>
    <property type="evidence" value="ECO:0007669"/>
    <property type="project" value="UniProtKB-UniRule"/>
</dbReference>
<dbReference type="CDD" id="cd00186">
    <property type="entry name" value="TOP1Ac"/>
    <property type="match status" value="1"/>
</dbReference>
<dbReference type="CDD" id="cd03362">
    <property type="entry name" value="TOPRIM_TopoIA_TopoIII"/>
    <property type="match status" value="1"/>
</dbReference>
<dbReference type="FunFam" id="1.10.290.10:FF:000003">
    <property type="entry name" value="DNA topoisomerase"/>
    <property type="match status" value="1"/>
</dbReference>
<dbReference type="Gene3D" id="3.40.50.140">
    <property type="match status" value="1"/>
</dbReference>
<dbReference type="Gene3D" id="3.30.65.10">
    <property type="entry name" value="Bacterial Topoisomerase I, domain 1"/>
    <property type="match status" value="1"/>
</dbReference>
<dbReference type="Gene3D" id="1.10.460.10">
    <property type="entry name" value="Topoisomerase I, domain 2"/>
    <property type="match status" value="1"/>
</dbReference>
<dbReference type="Gene3D" id="2.70.20.10">
    <property type="entry name" value="Topoisomerase I, domain 3"/>
    <property type="match status" value="1"/>
</dbReference>
<dbReference type="Gene3D" id="1.10.290.10">
    <property type="entry name" value="Topoisomerase I, domain 4"/>
    <property type="match status" value="1"/>
</dbReference>
<dbReference type="HAMAP" id="MF_00952">
    <property type="entry name" value="Topoisom_1_prok"/>
    <property type="match status" value="1"/>
</dbReference>
<dbReference type="InterPro" id="IPR000380">
    <property type="entry name" value="Topo_IA"/>
</dbReference>
<dbReference type="InterPro" id="IPR003601">
    <property type="entry name" value="Topo_IA_2"/>
</dbReference>
<dbReference type="InterPro" id="IPR023406">
    <property type="entry name" value="Topo_IA_AS"/>
</dbReference>
<dbReference type="InterPro" id="IPR013497">
    <property type="entry name" value="Topo_IA_cen"/>
</dbReference>
<dbReference type="InterPro" id="IPR013824">
    <property type="entry name" value="Topo_IA_cen_sub1"/>
</dbReference>
<dbReference type="InterPro" id="IPR013825">
    <property type="entry name" value="Topo_IA_cen_sub2"/>
</dbReference>
<dbReference type="InterPro" id="IPR013826">
    <property type="entry name" value="Topo_IA_cen_sub3"/>
</dbReference>
<dbReference type="InterPro" id="IPR023405">
    <property type="entry name" value="Topo_IA_core_domain"/>
</dbReference>
<dbReference type="InterPro" id="IPR003602">
    <property type="entry name" value="Topo_IA_DNA-bd_dom"/>
</dbReference>
<dbReference type="InterPro" id="IPR013498">
    <property type="entry name" value="Topo_IA_Znf"/>
</dbReference>
<dbReference type="InterPro" id="IPR028612">
    <property type="entry name" value="Topoisom_1_IA"/>
</dbReference>
<dbReference type="InterPro" id="IPR006171">
    <property type="entry name" value="TOPRIM_dom"/>
</dbReference>
<dbReference type="InterPro" id="IPR034144">
    <property type="entry name" value="TOPRIM_TopoIII"/>
</dbReference>
<dbReference type="NCBIfam" id="NF005555">
    <property type="entry name" value="PRK07220.1"/>
    <property type="match status" value="1"/>
</dbReference>
<dbReference type="PANTHER" id="PTHR11390:SF26">
    <property type="entry name" value="DNA TOPOISOMERASE 1"/>
    <property type="match status" value="1"/>
</dbReference>
<dbReference type="PANTHER" id="PTHR11390">
    <property type="entry name" value="PROKARYOTIC DNA TOPOISOMERASE"/>
    <property type="match status" value="1"/>
</dbReference>
<dbReference type="Pfam" id="PF01131">
    <property type="entry name" value="Topoisom_bac"/>
    <property type="match status" value="1"/>
</dbReference>
<dbReference type="Pfam" id="PF01751">
    <property type="entry name" value="Toprim"/>
    <property type="match status" value="1"/>
</dbReference>
<dbReference type="Pfam" id="PF01396">
    <property type="entry name" value="Zn_ribbon_Top1"/>
    <property type="match status" value="1"/>
</dbReference>
<dbReference type="PRINTS" id="PR00417">
    <property type="entry name" value="PRTPISMRASEI"/>
</dbReference>
<dbReference type="SMART" id="SM00437">
    <property type="entry name" value="TOP1Ac"/>
    <property type="match status" value="1"/>
</dbReference>
<dbReference type="SMART" id="SM00436">
    <property type="entry name" value="TOP1Bc"/>
    <property type="match status" value="1"/>
</dbReference>
<dbReference type="SMART" id="SM00493">
    <property type="entry name" value="TOPRIM"/>
    <property type="match status" value="1"/>
</dbReference>
<dbReference type="SUPFAM" id="SSF56712">
    <property type="entry name" value="Prokaryotic type I DNA topoisomerase"/>
    <property type="match status" value="1"/>
</dbReference>
<dbReference type="SUPFAM" id="SSF57783">
    <property type="entry name" value="Zinc beta-ribbon"/>
    <property type="match status" value="1"/>
</dbReference>
<dbReference type="PROSITE" id="PS00396">
    <property type="entry name" value="TOPO_IA_1"/>
    <property type="match status" value="1"/>
</dbReference>
<dbReference type="PROSITE" id="PS52039">
    <property type="entry name" value="TOPO_IA_2"/>
    <property type="match status" value="1"/>
</dbReference>
<dbReference type="PROSITE" id="PS50880">
    <property type="entry name" value="TOPRIM"/>
    <property type="match status" value="1"/>
</dbReference>
<protein>
    <recommendedName>
        <fullName evidence="1">DNA topoisomerase 1</fullName>
        <ecNumber evidence="1">5.6.2.1</ecNumber>
    </recommendedName>
    <alternativeName>
        <fullName evidence="1">DNA topoisomerase I</fullName>
    </alternativeName>
    <alternativeName>
        <fullName>Omega-protein</fullName>
    </alternativeName>
    <alternativeName>
        <fullName>Relaxing enzyme</fullName>
    </alternativeName>
    <alternativeName>
        <fullName>Swivelase</fullName>
    </alternativeName>
    <alternativeName>
        <fullName>Untwisting enzyme</fullName>
    </alternativeName>
</protein>
<name>TOP1_ARCFU</name>